<comment type="function">
    <text evidence="1">Binds voltage-independently at site-3 of sodium channels (Nav) and inhibits the inactivation of the activated channels, thereby blocking neuronal transmission.</text>
</comment>
<comment type="subcellular location">
    <subcellularLocation>
        <location>Secreted</location>
    </subcellularLocation>
</comment>
<comment type="tissue specificity">
    <text>Expressed by the venom gland.</text>
</comment>
<comment type="domain">
    <text evidence="3">Has the structural arrangement of an alpha-helix connected to antiparallel beta-sheets by disulfide bonds (CS-alpha/beta).</text>
</comment>
<comment type="similarity">
    <text evidence="3">Belongs to the long (4 C-C) scorpion toxin superfamily. Sodium channel inhibitor family. Alpha subfamily.</text>
</comment>
<evidence type="ECO:0000250" key="1"/>
<evidence type="ECO:0000255" key="2">
    <source>
        <dbReference type="PROSITE-ProRule" id="PRU01210"/>
    </source>
</evidence>
<evidence type="ECO:0000305" key="3"/>
<sequence>MNYLVMISLALLIAGVDSARDAYIAKNDNCVYECFQDSYCNDLCTKNGAKSGTCDWIGTYGDACLCYALPDNVPIKLSGECHR</sequence>
<proteinExistence type="evidence at transcript level"/>
<organism>
    <name type="scientific">Androctonus australis</name>
    <name type="common">Sahara scorpion</name>
    <dbReference type="NCBI Taxonomy" id="6858"/>
    <lineage>
        <taxon>Eukaryota</taxon>
        <taxon>Metazoa</taxon>
        <taxon>Ecdysozoa</taxon>
        <taxon>Arthropoda</taxon>
        <taxon>Chelicerata</taxon>
        <taxon>Arachnida</taxon>
        <taxon>Scorpiones</taxon>
        <taxon>Buthida</taxon>
        <taxon>Buthoidea</taxon>
        <taxon>Buthidae</taxon>
        <taxon>Androctonus</taxon>
    </lineage>
</organism>
<feature type="signal peptide" evidence="1">
    <location>
        <begin position="1"/>
        <end position="18"/>
    </location>
</feature>
<feature type="chain" id="PRO_0000035226" description="Toxin AahP985">
    <location>
        <begin position="19"/>
        <end position="83"/>
    </location>
</feature>
<feature type="domain" description="LCN-type CS-alpha/beta" evidence="2">
    <location>
        <begin position="20"/>
        <end position="82"/>
    </location>
</feature>
<feature type="disulfide bond" evidence="2">
    <location>
        <begin position="30"/>
        <end position="81"/>
    </location>
</feature>
<feature type="disulfide bond" evidence="2">
    <location>
        <begin position="34"/>
        <end position="54"/>
    </location>
</feature>
<feature type="disulfide bond" evidence="2">
    <location>
        <begin position="40"/>
        <end position="64"/>
    </location>
</feature>
<feature type="disulfide bond" evidence="2">
    <location>
        <begin position="44"/>
        <end position="66"/>
    </location>
</feature>
<protein>
    <recommendedName>
        <fullName>Toxin AahP985</fullName>
    </recommendedName>
    <alternativeName>
        <fullName>Neurotoxin pcD-985</fullName>
    </alternativeName>
</protein>
<reference key="1">
    <citation type="journal article" date="2001" name="FEBS Lett.">
        <title>Evidence for a position-specific deletion as an evolutionary link between long- and short-chain scorpion toxins.</title>
        <authorList>
            <person name="Ceard B."/>
            <person name="Martin-Eauclaire M.-F."/>
            <person name="Bougis P.E."/>
        </authorList>
    </citation>
    <scope>NUCLEOTIDE SEQUENCE [MRNA]</scope>
    <source>
        <strain>Hector</strain>
    </source>
</reference>
<dbReference type="EMBL" id="AJ308441">
    <property type="protein sequence ID" value="CAC37322.1"/>
    <property type="molecule type" value="mRNA"/>
</dbReference>
<dbReference type="SMR" id="Q9BLM3"/>
<dbReference type="GO" id="GO:0005576">
    <property type="term" value="C:extracellular region"/>
    <property type="evidence" value="ECO:0007669"/>
    <property type="project" value="UniProtKB-SubCell"/>
</dbReference>
<dbReference type="GO" id="GO:0019871">
    <property type="term" value="F:sodium channel inhibitor activity"/>
    <property type="evidence" value="ECO:0007669"/>
    <property type="project" value="InterPro"/>
</dbReference>
<dbReference type="GO" id="GO:0090729">
    <property type="term" value="F:toxin activity"/>
    <property type="evidence" value="ECO:0007669"/>
    <property type="project" value="UniProtKB-KW"/>
</dbReference>
<dbReference type="GO" id="GO:0006952">
    <property type="term" value="P:defense response"/>
    <property type="evidence" value="ECO:0007669"/>
    <property type="project" value="InterPro"/>
</dbReference>
<dbReference type="CDD" id="cd23106">
    <property type="entry name" value="neurotoxins_LC_scorpion"/>
    <property type="match status" value="1"/>
</dbReference>
<dbReference type="Gene3D" id="3.30.30.10">
    <property type="entry name" value="Knottin, scorpion toxin-like"/>
    <property type="match status" value="1"/>
</dbReference>
<dbReference type="InterPro" id="IPR044062">
    <property type="entry name" value="LCN-type_CS_alpha_beta_dom"/>
</dbReference>
<dbReference type="InterPro" id="IPR003614">
    <property type="entry name" value="Scorpion_toxin-like"/>
</dbReference>
<dbReference type="InterPro" id="IPR036574">
    <property type="entry name" value="Scorpion_toxin-like_sf"/>
</dbReference>
<dbReference type="InterPro" id="IPR018218">
    <property type="entry name" value="Scorpion_toxinL"/>
</dbReference>
<dbReference type="InterPro" id="IPR002061">
    <property type="entry name" value="Scorpion_toxinL/defensin"/>
</dbReference>
<dbReference type="Pfam" id="PF00537">
    <property type="entry name" value="Toxin_3"/>
    <property type="match status" value="1"/>
</dbReference>
<dbReference type="PRINTS" id="PR00285">
    <property type="entry name" value="SCORPNTOXIN"/>
</dbReference>
<dbReference type="SMART" id="SM00505">
    <property type="entry name" value="Knot1"/>
    <property type="match status" value="1"/>
</dbReference>
<dbReference type="SUPFAM" id="SSF57095">
    <property type="entry name" value="Scorpion toxin-like"/>
    <property type="match status" value="1"/>
</dbReference>
<dbReference type="PROSITE" id="PS51863">
    <property type="entry name" value="LCN_CSAB"/>
    <property type="match status" value="1"/>
</dbReference>
<accession>Q9BLM3</accession>
<keyword id="KW-1015">Disulfide bond</keyword>
<keyword id="KW-0872">Ion channel impairing toxin</keyword>
<keyword id="KW-0528">Neurotoxin</keyword>
<keyword id="KW-0964">Secreted</keyword>
<keyword id="KW-0732">Signal</keyword>
<keyword id="KW-0800">Toxin</keyword>
<keyword id="KW-0738">Voltage-gated sodium channel impairing toxin</keyword>
<name>SCXB_ANDAU</name>